<gene>
    <name evidence="1" type="primary">rlmM</name>
    <name type="ordered locus">ESA_00505</name>
</gene>
<comment type="function">
    <text evidence="1">Catalyzes the 2'-O-methylation at nucleotide C2498 in 23S rRNA.</text>
</comment>
<comment type="catalytic activity">
    <reaction evidence="1">
        <text>cytidine(2498) in 23S rRNA + S-adenosyl-L-methionine = 2'-O-methylcytidine(2498) in 23S rRNA + S-adenosyl-L-homocysteine + H(+)</text>
        <dbReference type="Rhea" id="RHEA:42788"/>
        <dbReference type="Rhea" id="RHEA-COMP:10244"/>
        <dbReference type="Rhea" id="RHEA-COMP:10245"/>
        <dbReference type="ChEBI" id="CHEBI:15378"/>
        <dbReference type="ChEBI" id="CHEBI:57856"/>
        <dbReference type="ChEBI" id="CHEBI:59789"/>
        <dbReference type="ChEBI" id="CHEBI:74495"/>
        <dbReference type="ChEBI" id="CHEBI:82748"/>
        <dbReference type="EC" id="2.1.1.186"/>
    </reaction>
</comment>
<comment type="subunit">
    <text evidence="1">Monomer.</text>
</comment>
<comment type="subcellular location">
    <subcellularLocation>
        <location evidence="1">Cytoplasm</location>
    </subcellularLocation>
</comment>
<comment type="similarity">
    <text evidence="1">Belongs to the class I-like SAM-binding methyltransferase superfamily. RNA methyltransferase RlmE family. RlmM subfamily.</text>
</comment>
<reference key="1">
    <citation type="journal article" date="2010" name="PLoS ONE">
        <title>Genome sequence of Cronobacter sakazakii BAA-894 and comparative genomic hybridization analysis with other Cronobacter species.</title>
        <authorList>
            <person name="Kucerova E."/>
            <person name="Clifton S.W."/>
            <person name="Xia X.Q."/>
            <person name="Long F."/>
            <person name="Porwollik S."/>
            <person name="Fulton L."/>
            <person name="Fronick C."/>
            <person name="Minx P."/>
            <person name="Kyung K."/>
            <person name="Warren W."/>
            <person name="Fulton R."/>
            <person name="Feng D."/>
            <person name="Wollam A."/>
            <person name="Shah N."/>
            <person name="Bhonagiri V."/>
            <person name="Nash W.E."/>
            <person name="Hallsworth-Pepin K."/>
            <person name="Wilson R.K."/>
            <person name="McClelland M."/>
            <person name="Forsythe S.J."/>
        </authorList>
    </citation>
    <scope>NUCLEOTIDE SEQUENCE [LARGE SCALE GENOMIC DNA]</scope>
    <source>
        <strain>ATCC BAA-894</strain>
    </source>
</reference>
<keyword id="KW-0963">Cytoplasm</keyword>
<keyword id="KW-0489">Methyltransferase</keyword>
<keyword id="KW-1185">Reference proteome</keyword>
<keyword id="KW-0698">rRNA processing</keyword>
<keyword id="KW-0949">S-adenosyl-L-methionine</keyword>
<keyword id="KW-0808">Transferase</keyword>
<dbReference type="EC" id="2.1.1.186" evidence="1"/>
<dbReference type="EMBL" id="CP000783">
    <property type="protein sequence ID" value="ABU75797.1"/>
    <property type="molecule type" value="Genomic_DNA"/>
</dbReference>
<dbReference type="RefSeq" id="WP_012123905.1">
    <property type="nucleotide sequence ID" value="NC_009778.1"/>
</dbReference>
<dbReference type="SMR" id="A7MR02"/>
<dbReference type="KEGG" id="esa:ESA_00505"/>
<dbReference type="PATRIC" id="fig|290339.8.peg.455"/>
<dbReference type="HOGENOM" id="CLU_043780_0_0_6"/>
<dbReference type="Proteomes" id="UP000000260">
    <property type="component" value="Chromosome"/>
</dbReference>
<dbReference type="GO" id="GO:0005737">
    <property type="term" value="C:cytoplasm"/>
    <property type="evidence" value="ECO:0007669"/>
    <property type="project" value="UniProtKB-SubCell"/>
</dbReference>
<dbReference type="GO" id="GO:0008757">
    <property type="term" value="F:S-adenosylmethionine-dependent methyltransferase activity"/>
    <property type="evidence" value="ECO:0007669"/>
    <property type="project" value="UniProtKB-UniRule"/>
</dbReference>
<dbReference type="GO" id="GO:0032259">
    <property type="term" value="P:methylation"/>
    <property type="evidence" value="ECO:0007669"/>
    <property type="project" value="UniProtKB-KW"/>
</dbReference>
<dbReference type="GO" id="GO:0006364">
    <property type="term" value="P:rRNA processing"/>
    <property type="evidence" value="ECO:0007669"/>
    <property type="project" value="UniProtKB-UniRule"/>
</dbReference>
<dbReference type="FunFam" id="3.40.50.150:FF:000020">
    <property type="entry name" value="Ribosomal RNA large subunit methyltransferase M"/>
    <property type="match status" value="1"/>
</dbReference>
<dbReference type="Gene3D" id="3.30.2300.20">
    <property type="match status" value="1"/>
</dbReference>
<dbReference type="Gene3D" id="3.30.70.2810">
    <property type="match status" value="1"/>
</dbReference>
<dbReference type="Gene3D" id="3.40.50.150">
    <property type="entry name" value="Vaccinia Virus protein VP39"/>
    <property type="match status" value="1"/>
</dbReference>
<dbReference type="HAMAP" id="MF_01551">
    <property type="entry name" value="23SrRNA_methyltr_M"/>
    <property type="match status" value="1"/>
</dbReference>
<dbReference type="InterPro" id="IPR040739">
    <property type="entry name" value="RlmM_FDX"/>
</dbReference>
<dbReference type="InterPro" id="IPR048646">
    <property type="entry name" value="RlmM_THUMP-like"/>
</dbReference>
<dbReference type="InterPro" id="IPR002877">
    <property type="entry name" value="RNA_MeTrfase_FtsJ_dom"/>
</dbReference>
<dbReference type="InterPro" id="IPR011224">
    <property type="entry name" value="rRNA_MeTrfase_M"/>
</dbReference>
<dbReference type="InterPro" id="IPR029063">
    <property type="entry name" value="SAM-dependent_MTases_sf"/>
</dbReference>
<dbReference type="NCBIfam" id="NF008734">
    <property type="entry name" value="PRK11760.1"/>
    <property type="match status" value="1"/>
</dbReference>
<dbReference type="PANTHER" id="PTHR37524">
    <property type="entry name" value="RIBOSOMAL RNA LARGE SUBUNIT METHYLTRANSFERASE M"/>
    <property type="match status" value="1"/>
</dbReference>
<dbReference type="PANTHER" id="PTHR37524:SF2">
    <property type="entry name" value="RIBOSOMAL RNA METHYLTRANSFERASE FTSJ DOMAIN-CONTAINING PROTEIN"/>
    <property type="match status" value="1"/>
</dbReference>
<dbReference type="Pfam" id="PF01728">
    <property type="entry name" value="FtsJ"/>
    <property type="match status" value="1"/>
</dbReference>
<dbReference type="Pfam" id="PF18125">
    <property type="entry name" value="RlmM_FDX"/>
    <property type="match status" value="1"/>
</dbReference>
<dbReference type="Pfam" id="PF21239">
    <property type="entry name" value="RLMM_N"/>
    <property type="match status" value="1"/>
</dbReference>
<dbReference type="PIRSF" id="PIRSF028774">
    <property type="entry name" value="UCP028774"/>
    <property type="match status" value="1"/>
</dbReference>
<dbReference type="SUPFAM" id="SSF53335">
    <property type="entry name" value="S-adenosyl-L-methionine-dependent methyltransferases"/>
    <property type="match status" value="1"/>
</dbReference>
<feature type="chain" id="PRO_0000314512" description="Ribosomal RNA large subunit methyltransferase M">
    <location>
        <begin position="1"/>
        <end position="366"/>
    </location>
</feature>
<feature type="active site" description="Proton acceptor" evidence="1">
    <location>
        <position position="306"/>
    </location>
</feature>
<feature type="binding site" evidence="1">
    <location>
        <position position="188"/>
    </location>
    <ligand>
        <name>S-adenosyl-L-methionine</name>
        <dbReference type="ChEBI" id="CHEBI:59789"/>
    </ligand>
</feature>
<feature type="binding site" evidence="1">
    <location>
        <begin position="221"/>
        <end position="224"/>
    </location>
    <ligand>
        <name>S-adenosyl-L-methionine</name>
        <dbReference type="ChEBI" id="CHEBI:59789"/>
    </ligand>
</feature>
<feature type="binding site" evidence="1">
    <location>
        <position position="240"/>
    </location>
    <ligand>
        <name>S-adenosyl-L-methionine</name>
        <dbReference type="ChEBI" id="CHEBI:59789"/>
    </ligand>
</feature>
<feature type="binding site" evidence="1">
    <location>
        <position position="260"/>
    </location>
    <ligand>
        <name>S-adenosyl-L-methionine</name>
        <dbReference type="ChEBI" id="CHEBI:59789"/>
    </ligand>
</feature>
<feature type="binding site" evidence="1">
    <location>
        <position position="277"/>
    </location>
    <ligand>
        <name>S-adenosyl-L-methionine</name>
        <dbReference type="ChEBI" id="CHEBI:59789"/>
    </ligand>
</feature>
<organism>
    <name type="scientific">Cronobacter sakazakii (strain ATCC BAA-894)</name>
    <name type="common">Enterobacter sakazakii</name>
    <dbReference type="NCBI Taxonomy" id="290339"/>
    <lineage>
        <taxon>Bacteria</taxon>
        <taxon>Pseudomonadati</taxon>
        <taxon>Pseudomonadota</taxon>
        <taxon>Gammaproteobacteria</taxon>
        <taxon>Enterobacterales</taxon>
        <taxon>Enterobacteriaceae</taxon>
        <taxon>Cronobacter</taxon>
    </lineage>
</organism>
<proteinExistence type="inferred from homology"/>
<protein>
    <recommendedName>
        <fullName evidence="1">Ribosomal RNA large subunit methyltransferase M</fullName>
        <ecNumber evidence="1">2.1.1.186</ecNumber>
    </recommendedName>
    <alternativeName>
        <fullName evidence="1">23S rRNA (cytidine2498-2'-O)-methyltransferase</fullName>
    </alternativeName>
    <alternativeName>
        <fullName evidence="1">23S rRNA 2'-O-ribose methyltransferase RlmM</fullName>
    </alternativeName>
</protein>
<sequence length="366" mass="41801">MNKVILYCRQGFEKECAAEITDKAAQQGVFGFARVKENSAYVIFECYQPDDADKLARELPFSSLIFARQMFVAGELLQDLPPEDRVTPVVGMLQGVVEKGGELRVEVADTNESKELMKFCRKFTVPLRTALRDAKILANFETPKRPVVHVFFIAPGCCYTGYSYTNNNSPFYMGIPRLKFPADAPSRSTLKLEEAFHVFIPADEWDERLANGMYAVDLGACPGGWTYQLVKRNMWVASVDNGPMAQSLMDTGQVTWLREDGFKYRPTRTNITWMVCDMVEKPAKVAALMAQWLVNGWCRETIFNLKLPMKKRYEEVSQNIASIQAQLDEHGINAQIQARQLYHDREEVTVHVRRWWAAVGGRRDER</sequence>
<name>RLMM_CROS8</name>
<evidence type="ECO:0000255" key="1">
    <source>
        <dbReference type="HAMAP-Rule" id="MF_01551"/>
    </source>
</evidence>
<accession>A7MR02</accession>